<proteinExistence type="inferred from homology"/>
<gene>
    <name type="primary">COB</name>
    <name type="synonym">CYTB</name>
</gene>
<sequence length="387" mass="43532">MRILKSHPLLKLVNSYLIDASQPSNISYLWNFGSLLLLCLIIQIITGVTLAMHYSPNVLEAFNSIEHIMRDVNNGWLVRYLHSNTASAFFFLVYLHIGRGMYYGSYRAPRTLVWAIGTVILIVMIVTAFLGYVLPYGQMSLWGATVITNLVSAIPWIGQDIVEFIWGGFSVNNATLNRFFALHYLLPFILVALVLMHLIALHDTAGSSNPLGISGNYDRITFAPYYLFKDLITIFIFIFVLSSFVFFMSNVLGDSENYIMANPMQTPAAIVPEWYLLPFYAILRSIPNKLLGVIAMFAAILAIMLLPITDLGRSKGLQFRPLSKFAFWVFVVNFLILMKLGACHVETPFIELGQLSTALYFGHFIIIVPIISLIENTLVDLNTMSKG</sequence>
<keyword id="KW-0249">Electron transport</keyword>
<keyword id="KW-0349">Heme</keyword>
<keyword id="KW-0408">Iron</keyword>
<keyword id="KW-0472">Membrane</keyword>
<keyword id="KW-0479">Metal-binding</keyword>
<keyword id="KW-0496">Mitochondrion</keyword>
<keyword id="KW-0999">Mitochondrion inner membrane</keyword>
<keyword id="KW-1185">Reference proteome</keyword>
<keyword id="KW-0679">Respiratory chain</keyword>
<keyword id="KW-0812">Transmembrane</keyword>
<keyword id="KW-1133">Transmembrane helix</keyword>
<keyword id="KW-0813">Transport</keyword>
<keyword id="KW-0830">Ubiquinone</keyword>
<dbReference type="EMBL" id="X55026">
    <property type="protein sequence ID" value="CAA38772.1"/>
    <property type="molecule type" value="Genomic_DNA"/>
</dbReference>
<dbReference type="PIR" id="A48326">
    <property type="entry name" value="A48326"/>
</dbReference>
<dbReference type="SMR" id="Q02655"/>
<dbReference type="FunCoup" id="Q02655">
    <property type="interactions" value="600"/>
</dbReference>
<dbReference type="STRING" id="515849.Q02655"/>
<dbReference type="InParanoid" id="Q02655"/>
<dbReference type="Proteomes" id="UP000001197">
    <property type="component" value="Mitochondrion"/>
</dbReference>
<dbReference type="GO" id="GO:0005743">
    <property type="term" value="C:mitochondrial inner membrane"/>
    <property type="evidence" value="ECO:0007669"/>
    <property type="project" value="UniProtKB-SubCell"/>
</dbReference>
<dbReference type="GO" id="GO:0045275">
    <property type="term" value="C:respiratory chain complex III"/>
    <property type="evidence" value="ECO:0007669"/>
    <property type="project" value="InterPro"/>
</dbReference>
<dbReference type="GO" id="GO:0046872">
    <property type="term" value="F:metal ion binding"/>
    <property type="evidence" value="ECO:0007669"/>
    <property type="project" value="UniProtKB-KW"/>
</dbReference>
<dbReference type="GO" id="GO:0008121">
    <property type="term" value="F:ubiquinol-cytochrome-c reductase activity"/>
    <property type="evidence" value="ECO:0007669"/>
    <property type="project" value="InterPro"/>
</dbReference>
<dbReference type="GO" id="GO:0006122">
    <property type="term" value="P:mitochondrial electron transport, ubiquinol to cytochrome c"/>
    <property type="evidence" value="ECO:0007669"/>
    <property type="project" value="TreeGrafter"/>
</dbReference>
<dbReference type="CDD" id="cd00290">
    <property type="entry name" value="cytochrome_b_C"/>
    <property type="match status" value="1"/>
</dbReference>
<dbReference type="CDD" id="cd00284">
    <property type="entry name" value="Cytochrome_b_N"/>
    <property type="match status" value="1"/>
</dbReference>
<dbReference type="FunFam" id="1.20.810.10:FF:000002">
    <property type="entry name" value="Cytochrome b"/>
    <property type="match status" value="1"/>
</dbReference>
<dbReference type="Gene3D" id="1.20.810.10">
    <property type="entry name" value="Cytochrome Bc1 Complex, Chain C"/>
    <property type="match status" value="1"/>
</dbReference>
<dbReference type="InterPro" id="IPR005798">
    <property type="entry name" value="Cyt_b/b6_C"/>
</dbReference>
<dbReference type="InterPro" id="IPR036150">
    <property type="entry name" value="Cyt_b/b6_C_sf"/>
</dbReference>
<dbReference type="InterPro" id="IPR005797">
    <property type="entry name" value="Cyt_b/b6_N"/>
</dbReference>
<dbReference type="InterPro" id="IPR027387">
    <property type="entry name" value="Cytb/b6-like_sf"/>
</dbReference>
<dbReference type="InterPro" id="IPR030689">
    <property type="entry name" value="Cytochrome_b"/>
</dbReference>
<dbReference type="InterPro" id="IPR048260">
    <property type="entry name" value="Cytochrome_b_C_euk/bac"/>
</dbReference>
<dbReference type="InterPro" id="IPR048259">
    <property type="entry name" value="Cytochrome_b_N_euk/bac"/>
</dbReference>
<dbReference type="InterPro" id="IPR016174">
    <property type="entry name" value="Di-haem_cyt_TM"/>
</dbReference>
<dbReference type="PANTHER" id="PTHR19271">
    <property type="entry name" value="CYTOCHROME B"/>
    <property type="match status" value="1"/>
</dbReference>
<dbReference type="PANTHER" id="PTHR19271:SF16">
    <property type="entry name" value="CYTOCHROME B"/>
    <property type="match status" value="1"/>
</dbReference>
<dbReference type="Pfam" id="PF00032">
    <property type="entry name" value="Cytochrom_B_C"/>
    <property type="match status" value="1"/>
</dbReference>
<dbReference type="Pfam" id="PF00033">
    <property type="entry name" value="Cytochrome_B"/>
    <property type="match status" value="1"/>
</dbReference>
<dbReference type="PIRSF" id="PIRSF038885">
    <property type="entry name" value="COB"/>
    <property type="match status" value="1"/>
</dbReference>
<dbReference type="SUPFAM" id="SSF81648">
    <property type="entry name" value="a domain/subunit of cytochrome bc1 complex (Ubiquinol-cytochrome c reductase)"/>
    <property type="match status" value="1"/>
</dbReference>
<dbReference type="SUPFAM" id="SSF81342">
    <property type="entry name" value="Transmembrane di-heme cytochromes"/>
    <property type="match status" value="1"/>
</dbReference>
<dbReference type="PROSITE" id="PS51003">
    <property type="entry name" value="CYTB_CTER"/>
    <property type="match status" value="1"/>
</dbReference>
<dbReference type="PROSITE" id="PS51002">
    <property type="entry name" value="CYTB_NTER"/>
    <property type="match status" value="1"/>
</dbReference>
<comment type="function">
    <text evidence="3">Component of the ubiquinol-cytochrome c reductase complex (complex III or cytochrome b-c1 complex) that is part of the mitochondrial respiratory chain. The b-c1 complex mediates electron transfer from ubiquinol to cytochrome c. Contributes to the generation of a proton gradient across the mitochondrial membrane that is then used for ATP synthesis.</text>
</comment>
<comment type="cofactor">
    <cofactor evidence="3">
        <name>heme b</name>
        <dbReference type="ChEBI" id="CHEBI:60344"/>
    </cofactor>
    <text evidence="3">Binds 2 heme b groups non-covalently.</text>
</comment>
<comment type="subunit">
    <text evidence="3">Fungal cytochrome b-c1 complex contains 10 subunits; 3 respiratory subunits, 2 core proteins and 5 low-molecular weight proteins. Cytochrome b-c1 complex is a homodimer.</text>
</comment>
<comment type="subcellular location">
    <subcellularLocation>
        <location evidence="3">Mitochondrion inner membrane</location>
        <topology evidence="3">Multi-pass membrane protein</topology>
    </subcellularLocation>
</comment>
<comment type="miscellaneous">
    <text evidence="1">Heme 1 (or BL or b562) is low-potential and absorbs at about 562 nm, and heme 2 (or BH or b566) is high-potential and absorbs at about 566 nm.</text>
</comment>
<comment type="similarity">
    <text evidence="4 5">Belongs to the cytochrome b family.</text>
</comment>
<comment type="caution">
    <text evidence="3">The protein contains only eight transmembrane helices, not nine as predicted by bioinformatics tools.</text>
</comment>
<evidence type="ECO:0000250" key="1"/>
<evidence type="ECO:0000250" key="2">
    <source>
        <dbReference type="UniProtKB" id="P00157"/>
    </source>
</evidence>
<evidence type="ECO:0000250" key="3">
    <source>
        <dbReference type="UniProtKB" id="P00163"/>
    </source>
</evidence>
<evidence type="ECO:0000255" key="4">
    <source>
        <dbReference type="PROSITE-ProRule" id="PRU00967"/>
    </source>
</evidence>
<evidence type="ECO:0000255" key="5">
    <source>
        <dbReference type="PROSITE-ProRule" id="PRU00968"/>
    </source>
</evidence>
<accession>Q02655</accession>
<organism>
    <name type="scientific">Podospora anserina (strain S / ATCC MYA-4624 / DSM 980 / FGSC 10383)</name>
    <name type="common">Pleurage anserina</name>
    <dbReference type="NCBI Taxonomy" id="515849"/>
    <lineage>
        <taxon>Eukaryota</taxon>
        <taxon>Fungi</taxon>
        <taxon>Dikarya</taxon>
        <taxon>Ascomycota</taxon>
        <taxon>Pezizomycotina</taxon>
        <taxon>Sordariomycetes</taxon>
        <taxon>Sordariomycetidae</taxon>
        <taxon>Sordariales</taxon>
        <taxon>Podosporaceae</taxon>
        <taxon>Podospora</taxon>
        <taxon>Podospora anserina</taxon>
    </lineage>
</organism>
<feature type="chain" id="PRO_0000061754" description="Cytochrome b">
    <location>
        <begin position="1"/>
        <end position="387"/>
    </location>
</feature>
<feature type="transmembrane region" description="Helical" evidence="3">
    <location>
        <begin position="32"/>
        <end position="52"/>
    </location>
</feature>
<feature type="transmembrane region" description="Helical" evidence="3">
    <location>
        <begin position="76"/>
        <end position="98"/>
    </location>
</feature>
<feature type="transmembrane region" description="Helical" evidence="3">
    <location>
        <begin position="113"/>
        <end position="133"/>
    </location>
</feature>
<feature type="transmembrane region" description="Helical" evidence="3">
    <location>
        <begin position="179"/>
        <end position="199"/>
    </location>
</feature>
<feature type="transmembrane region" description="Helical" evidence="3">
    <location>
        <begin position="226"/>
        <end position="246"/>
    </location>
</feature>
<feature type="transmembrane region" description="Helical" evidence="3">
    <location>
        <begin position="290"/>
        <end position="310"/>
    </location>
</feature>
<feature type="transmembrane region" description="Helical" evidence="3">
    <location>
        <begin position="322"/>
        <end position="342"/>
    </location>
</feature>
<feature type="transmembrane region" description="Helical" evidence="3">
    <location>
        <begin position="349"/>
        <end position="369"/>
    </location>
</feature>
<feature type="binding site" description="axial binding residue" evidence="5">
    <location>
        <position position="82"/>
    </location>
    <ligand>
        <name>heme b</name>
        <dbReference type="ChEBI" id="CHEBI:60344"/>
        <label>b562</label>
    </ligand>
    <ligandPart>
        <name>Fe</name>
        <dbReference type="ChEBI" id="CHEBI:18248"/>
    </ligandPart>
</feature>
<feature type="binding site" description="axial binding residue" evidence="5">
    <location>
        <position position="96"/>
    </location>
    <ligand>
        <name>heme b</name>
        <dbReference type="ChEBI" id="CHEBI:60344"/>
        <label>b566</label>
    </ligand>
    <ligandPart>
        <name>Fe</name>
        <dbReference type="ChEBI" id="CHEBI:18248"/>
    </ligandPart>
</feature>
<feature type="binding site" description="axial binding residue" evidence="5">
    <location>
        <position position="183"/>
    </location>
    <ligand>
        <name>heme b</name>
        <dbReference type="ChEBI" id="CHEBI:60344"/>
        <label>b562</label>
    </ligand>
    <ligandPart>
        <name>Fe</name>
        <dbReference type="ChEBI" id="CHEBI:18248"/>
    </ligandPart>
</feature>
<feature type="binding site" description="axial binding residue" evidence="5">
    <location>
        <position position="197"/>
    </location>
    <ligand>
        <name>heme b</name>
        <dbReference type="ChEBI" id="CHEBI:60344"/>
        <label>b566</label>
    </ligand>
    <ligandPart>
        <name>Fe</name>
        <dbReference type="ChEBI" id="CHEBI:18248"/>
    </ligandPart>
</feature>
<feature type="binding site" evidence="2">
    <location>
        <position position="202"/>
    </location>
    <ligand>
        <name>a ubiquinone</name>
        <dbReference type="ChEBI" id="CHEBI:16389"/>
    </ligand>
</feature>
<geneLocation type="mitochondrion"/>
<protein>
    <recommendedName>
        <fullName>Cytochrome b</fullName>
    </recommendedName>
    <alternativeName>
        <fullName>Complex III subunit 3</fullName>
    </alternativeName>
    <alternativeName>
        <fullName>Complex III subunit III</fullName>
    </alternativeName>
    <alternativeName>
        <fullName>Cytochrome b-c1 complex subunit 3</fullName>
    </alternativeName>
    <alternativeName>
        <fullName>Ubiquinol-cytochrome-c reductase complex cytochrome b subunit</fullName>
    </alternativeName>
</protein>
<name>CYB_PODAN</name>
<reference key="1">
    <citation type="journal article" date="1989" name="Curr. Genet.">
        <title>DNA sequence analysis of the apocytochrome b gene of Podospora anserina: a new family of intronic open reading frame.</title>
        <authorList>
            <person name="Cummings D.J."/>
            <person name="Michel F."/>
            <person name="McNally K.L."/>
        </authorList>
    </citation>
    <scope>NUCLEOTIDE SEQUENCE [GENOMIC DNA]</scope>
</reference>
<reference key="2">
    <citation type="journal article" date="1990" name="Curr. Genet.">
        <title>The complete DNA sequence of the mitochondrial genome of Podospora anserina.</title>
        <authorList>
            <person name="Cummings D.J."/>
            <person name="McNally K.L."/>
            <person name="Domenico J.M."/>
            <person name="Matsuura E.T."/>
        </authorList>
    </citation>
    <scope>NUCLEOTIDE SEQUENCE [LARGE SCALE GENOMIC DNA]</scope>
    <source>
        <strain>s</strain>
    </source>
</reference>